<comment type="function">
    <text evidence="1">Functions in the biosynthesis of branched-chain amino acids. Catalyzes the dehydration of (2R,3R)-2,3-dihydroxy-3-methylpentanoate (2,3-dihydroxy-3-methylvalerate) into 2-oxo-3-methylpentanoate (2-oxo-3-methylvalerate) and of (2R)-2,3-dihydroxy-3-methylbutanoate (2,3-dihydroxyisovalerate) into 2-oxo-3-methylbutanoate (2-oxoisovalerate), the penultimate precursor to L-isoleucine and L-valine, respectively.</text>
</comment>
<comment type="catalytic activity">
    <reaction evidence="1">
        <text>(2R)-2,3-dihydroxy-3-methylbutanoate = 3-methyl-2-oxobutanoate + H2O</text>
        <dbReference type="Rhea" id="RHEA:24809"/>
        <dbReference type="ChEBI" id="CHEBI:11851"/>
        <dbReference type="ChEBI" id="CHEBI:15377"/>
        <dbReference type="ChEBI" id="CHEBI:49072"/>
        <dbReference type="EC" id="4.2.1.9"/>
    </reaction>
    <physiologicalReaction direction="left-to-right" evidence="1">
        <dbReference type="Rhea" id="RHEA:24810"/>
    </physiologicalReaction>
</comment>
<comment type="catalytic activity">
    <reaction evidence="1">
        <text>(2R,3R)-2,3-dihydroxy-3-methylpentanoate = (S)-3-methyl-2-oxopentanoate + H2O</text>
        <dbReference type="Rhea" id="RHEA:27694"/>
        <dbReference type="ChEBI" id="CHEBI:15377"/>
        <dbReference type="ChEBI" id="CHEBI:35146"/>
        <dbReference type="ChEBI" id="CHEBI:49258"/>
        <dbReference type="EC" id="4.2.1.9"/>
    </reaction>
    <physiologicalReaction direction="left-to-right" evidence="1">
        <dbReference type="Rhea" id="RHEA:27695"/>
    </physiologicalReaction>
</comment>
<comment type="cofactor">
    <cofactor evidence="1">
        <name>[2Fe-2S] cluster</name>
        <dbReference type="ChEBI" id="CHEBI:190135"/>
    </cofactor>
    <text evidence="1">Binds 1 [2Fe-2S] cluster per subunit. This cluster acts as a Lewis acid cofactor.</text>
</comment>
<comment type="cofactor">
    <cofactor evidence="1">
        <name>Mg(2+)</name>
        <dbReference type="ChEBI" id="CHEBI:18420"/>
    </cofactor>
</comment>
<comment type="pathway">
    <text evidence="1">Amino-acid biosynthesis; L-isoleucine biosynthesis; L-isoleucine from 2-oxobutanoate: step 3/4.</text>
</comment>
<comment type="pathway">
    <text evidence="1">Amino-acid biosynthesis; L-valine biosynthesis; L-valine from pyruvate: step 3/4.</text>
</comment>
<comment type="subunit">
    <text evidence="1">Homodimer.</text>
</comment>
<comment type="similarity">
    <text evidence="1">Belongs to the IlvD/Edd family.</text>
</comment>
<protein>
    <recommendedName>
        <fullName evidence="1">Dihydroxy-acid dehydratase 1</fullName>
        <shortName evidence="1">DAD 1</shortName>
        <ecNumber evidence="1">4.2.1.9</ecNumber>
    </recommendedName>
</protein>
<dbReference type="EC" id="4.2.1.9" evidence="1"/>
<dbReference type="EMBL" id="BA000040">
    <property type="protein sequence ID" value="BAC49801.1"/>
    <property type="molecule type" value="Genomic_DNA"/>
</dbReference>
<dbReference type="RefSeq" id="NP_771176.1">
    <property type="nucleotide sequence ID" value="NC_004463.1"/>
</dbReference>
<dbReference type="RefSeq" id="WP_011087307.1">
    <property type="nucleotide sequence ID" value="NC_004463.1"/>
</dbReference>
<dbReference type="SMR" id="Q89LK8"/>
<dbReference type="FunCoup" id="Q89LK8">
    <property type="interactions" value="612"/>
</dbReference>
<dbReference type="STRING" id="224911.AAV28_19910"/>
<dbReference type="EnsemblBacteria" id="BAC49801">
    <property type="protein sequence ID" value="BAC49801"/>
    <property type="gene ID" value="BAC49801"/>
</dbReference>
<dbReference type="GeneID" id="46491549"/>
<dbReference type="KEGG" id="bja:bll4536"/>
<dbReference type="PATRIC" id="fig|224911.44.peg.4329"/>
<dbReference type="eggNOG" id="COG0129">
    <property type="taxonomic scope" value="Bacteria"/>
</dbReference>
<dbReference type="HOGENOM" id="CLU_014271_4_2_5"/>
<dbReference type="InParanoid" id="Q89LK8"/>
<dbReference type="OrthoDB" id="7793094at2"/>
<dbReference type="PhylomeDB" id="Q89LK8"/>
<dbReference type="UniPathway" id="UPA00047">
    <property type="reaction ID" value="UER00057"/>
</dbReference>
<dbReference type="UniPathway" id="UPA00049">
    <property type="reaction ID" value="UER00061"/>
</dbReference>
<dbReference type="Proteomes" id="UP000002526">
    <property type="component" value="Chromosome"/>
</dbReference>
<dbReference type="GO" id="GO:0005829">
    <property type="term" value="C:cytosol"/>
    <property type="evidence" value="ECO:0000318"/>
    <property type="project" value="GO_Central"/>
</dbReference>
<dbReference type="GO" id="GO:0051537">
    <property type="term" value="F:2 iron, 2 sulfur cluster binding"/>
    <property type="evidence" value="ECO:0007669"/>
    <property type="project" value="UniProtKB-UniRule"/>
</dbReference>
<dbReference type="GO" id="GO:0004160">
    <property type="term" value="F:dihydroxy-acid dehydratase activity"/>
    <property type="evidence" value="ECO:0007669"/>
    <property type="project" value="UniProtKB-UniRule"/>
</dbReference>
<dbReference type="GO" id="GO:0016836">
    <property type="term" value="F:hydro-lyase activity"/>
    <property type="evidence" value="ECO:0000318"/>
    <property type="project" value="GO_Central"/>
</dbReference>
<dbReference type="GO" id="GO:0000287">
    <property type="term" value="F:magnesium ion binding"/>
    <property type="evidence" value="ECO:0007669"/>
    <property type="project" value="UniProtKB-UniRule"/>
</dbReference>
<dbReference type="GO" id="GO:0009097">
    <property type="term" value="P:isoleucine biosynthetic process"/>
    <property type="evidence" value="ECO:0007669"/>
    <property type="project" value="UniProtKB-UniRule"/>
</dbReference>
<dbReference type="GO" id="GO:0009099">
    <property type="term" value="P:L-valine biosynthetic process"/>
    <property type="evidence" value="ECO:0007669"/>
    <property type="project" value="UniProtKB-UniRule"/>
</dbReference>
<dbReference type="FunFam" id="3.50.30.80:FF:000001">
    <property type="entry name" value="Dihydroxy-acid dehydratase"/>
    <property type="match status" value="1"/>
</dbReference>
<dbReference type="Gene3D" id="3.50.30.80">
    <property type="entry name" value="IlvD/EDD C-terminal domain-like"/>
    <property type="match status" value="1"/>
</dbReference>
<dbReference type="HAMAP" id="MF_00012">
    <property type="entry name" value="IlvD"/>
    <property type="match status" value="1"/>
</dbReference>
<dbReference type="InterPro" id="IPR042096">
    <property type="entry name" value="Dihydro-acid_dehy_C"/>
</dbReference>
<dbReference type="InterPro" id="IPR004404">
    <property type="entry name" value="DihydroxyA_deHydtase"/>
</dbReference>
<dbReference type="InterPro" id="IPR020558">
    <property type="entry name" value="DiOHA_6PGluconate_deHydtase_CS"/>
</dbReference>
<dbReference type="InterPro" id="IPR056740">
    <property type="entry name" value="ILV_EDD_C"/>
</dbReference>
<dbReference type="InterPro" id="IPR000581">
    <property type="entry name" value="ILV_EDD_N"/>
</dbReference>
<dbReference type="InterPro" id="IPR037237">
    <property type="entry name" value="IlvD/EDD_N"/>
</dbReference>
<dbReference type="NCBIfam" id="TIGR00110">
    <property type="entry name" value="ilvD"/>
    <property type="match status" value="1"/>
</dbReference>
<dbReference type="NCBIfam" id="NF009103">
    <property type="entry name" value="PRK12448.1"/>
    <property type="match status" value="1"/>
</dbReference>
<dbReference type="PANTHER" id="PTHR43661">
    <property type="entry name" value="D-XYLONATE DEHYDRATASE"/>
    <property type="match status" value="1"/>
</dbReference>
<dbReference type="PANTHER" id="PTHR43661:SF3">
    <property type="entry name" value="D-XYLONATE DEHYDRATASE YAGF-RELATED"/>
    <property type="match status" value="1"/>
</dbReference>
<dbReference type="Pfam" id="PF24877">
    <property type="entry name" value="ILV_EDD_C"/>
    <property type="match status" value="1"/>
</dbReference>
<dbReference type="Pfam" id="PF00920">
    <property type="entry name" value="ILVD_EDD_N"/>
    <property type="match status" value="1"/>
</dbReference>
<dbReference type="SUPFAM" id="SSF143975">
    <property type="entry name" value="IlvD/EDD N-terminal domain-like"/>
    <property type="match status" value="1"/>
</dbReference>
<dbReference type="SUPFAM" id="SSF52016">
    <property type="entry name" value="LeuD/IlvD-like"/>
    <property type="match status" value="1"/>
</dbReference>
<dbReference type="PROSITE" id="PS00886">
    <property type="entry name" value="ILVD_EDD_1"/>
    <property type="match status" value="1"/>
</dbReference>
<dbReference type="PROSITE" id="PS00887">
    <property type="entry name" value="ILVD_EDD_2"/>
    <property type="match status" value="1"/>
</dbReference>
<sequence length="616" mass="65288">MPAYRSRTTTHGRNMAGARGLWRATGMKDADFGKPIIAVVNSFTQFVPGHVHLKDLGQLVAREIEQAGGVAKEFNTIAVDDGIAMGHDGMLYSLPSRELIADSVEYMANAHCADGLVCISNCDKITPGMLMAALRLNIPAVFVSGGPMEAGKVKLQGKTKAVDLIDAMVAAADSKVSDEDVKVIERSACPTCGSCSGMFTANSMNCLTEALGLALPGNGSVVATHADRKRLFVEAGHTIVDLVRRYYEQDDASVLPRNVANFKAFENAMTLDIAMGGSTNTVLHLLAAAHEGQVAFTMKDIDRLSRRVPVLCKVAPSVADVHVEDVHRAGGIMGILGELDRAGLIDTSVSTVHAPTMADALERWDIKRSKSEAVRTFYRASPGGIPTQVAFSQERRYDELDADREKGVVRDLEHAFSKDGGLAVLYGNLAQDGCIVKTAGVDASILKFSGPARVFESQDAAVEGILGGKVVAGEVVVIIYEGPRGGPGMQEMLYPTSYLKSMGLGKACALVTDGRFSGGSSGLSIGHLSPEAAEGGNIGLVRTGDLIAIDIPNRSITLEVSDEELAKRRASEEAKGDAAWQATGRKRNVSTALQAYAALTTSAARGAVREVKRRSN</sequence>
<keyword id="KW-0001">2Fe-2S</keyword>
<keyword id="KW-0028">Amino-acid biosynthesis</keyword>
<keyword id="KW-0100">Branched-chain amino acid biosynthesis</keyword>
<keyword id="KW-0408">Iron</keyword>
<keyword id="KW-0411">Iron-sulfur</keyword>
<keyword id="KW-0456">Lyase</keyword>
<keyword id="KW-0460">Magnesium</keyword>
<keyword id="KW-0479">Metal-binding</keyword>
<keyword id="KW-1185">Reference proteome</keyword>
<reference key="1">
    <citation type="journal article" date="2002" name="DNA Res.">
        <title>Complete genomic sequence of nitrogen-fixing symbiotic bacterium Bradyrhizobium japonicum USDA110.</title>
        <authorList>
            <person name="Kaneko T."/>
            <person name="Nakamura Y."/>
            <person name="Sato S."/>
            <person name="Minamisawa K."/>
            <person name="Uchiumi T."/>
            <person name="Sasamoto S."/>
            <person name="Watanabe A."/>
            <person name="Idesawa K."/>
            <person name="Iriguchi M."/>
            <person name="Kawashima K."/>
            <person name="Kohara M."/>
            <person name="Matsumoto M."/>
            <person name="Shimpo S."/>
            <person name="Tsuruoka H."/>
            <person name="Wada T."/>
            <person name="Yamada M."/>
            <person name="Tabata S."/>
        </authorList>
    </citation>
    <scope>NUCLEOTIDE SEQUENCE [LARGE SCALE GENOMIC DNA]</scope>
    <source>
        <strain>JCM 10833 / BCRC 13528 / IAM 13628 / NBRC 14792 / USDA 110</strain>
    </source>
</reference>
<gene>
    <name evidence="1" type="primary">ilvD1</name>
    <name type="ordered locus">bll4536</name>
</gene>
<evidence type="ECO:0000255" key="1">
    <source>
        <dbReference type="HAMAP-Rule" id="MF_00012"/>
    </source>
</evidence>
<accession>Q89LK8</accession>
<feature type="chain" id="PRO_0000103441" description="Dihydroxy-acid dehydratase 1">
    <location>
        <begin position="1"/>
        <end position="616"/>
    </location>
</feature>
<feature type="active site" description="Proton acceptor" evidence="1">
    <location>
        <position position="517"/>
    </location>
</feature>
<feature type="binding site" evidence="1">
    <location>
        <position position="81"/>
    </location>
    <ligand>
        <name>Mg(2+)</name>
        <dbReference type="ChEBI" id="CHEBI:18420"/>
    </ligand>
</feature>
<feature type="binding site" evidence="1">
    <location>
        <position position="122"/>
    </location>
    <ligand>
        <name>[2Fe-2S] cluster</name>
        <dbReference type="ChEBI" id="CHEBI:190135"/>
    </ligand>
</feature>
<feature type="binding site" evidence="1">
    <location>
        <position position="123"/>
    </location>
    <ligand>
        <name>Mg(2+)</name>
        <dbReference type="ChEBI" id="CHEBI:18420"/>
    </ligand>
</feature>
<feature type="binding site" description="via carbamate group" evidence="1">
    <location>
        <position position="124"/>
    </location>
    <ligand>
        <name>Mg(2+)</name>
        <dbReference type="ChEBI" id="CHEBI:18420"/>
    </ligand>
</feature>
<feature type="binding site" evidence="1">
    <location>
        <position position="195"/>
    </location>
    <ligand>
        <name>[2Fe-2S] cluster</name>
        <dbReference type="ChEBI" id="CHEBI:190135"/>
    </ligand>
</feature>
<feature type="binding site" evidence="1">
    <location>
        <position position="491"/>
    </location>
    <ligand>
        <name>Mg(2+)</name>
        <dbReference type="ChEBI" id="CHEBI:18420"/>
    </ligand>
</feature>
<feature type="modified residue" description="N6-carboxylysine" evidence="1">
    <location>
        <position position="124"/>
    </location>
</feature>
<name>ILVD1_BRADU</name>
<organism>
    <name type="scientific">Bradyrhizobium diazoefficiens (strain JCM 10833 / BCRC 13528 / IAM 13628 / NBRC 14792 / USDA 110)</name>
    <dbReference type="NCBI Taxonomy" id="224911"/>
    <lineage>
        <taxon>Bacteria</taxon>
        <taxon>Pseudomonadati</taxon>
        <taxon>Pseudomonadota</taxon>
        <taxon>Alphaproteobacteria</taxon>
        <taxon>Hyphomicrobiales</taxon>
        <taxon>Nitrobacteraceae</taxon>
        <taxon>Bradyrhizobium</taxon>
    </lineage>
</organism>
<proteinExistence type="inferred from homology"/>